<dbReference type="EMBL" id="AE008384">
    <property type="protein sequence ID" value="AAM30983.1"/>
    <property type="molecule type" value="Genomic_DNA"/>
</dbReference>
<dbReference type="RefSeq" id="WP_011033234.1">
    <property type="nucleotide sequence ID" value="NC_003901.1"/>
</dbReference>
<dbReference type="KEGG" id="mma:MM_1287"/>
<dbReference type="PATRIC" id="fig|192952.21.peg.1496"/>
<dbReference type="eggNOG" id="arCOG04984">
    <property type="taxonomic scope" value="Archaea"/>
</dbReference>
<dbReference type="HOGENOM" id="CLU_018288_2_0_2"/>
<dbReference type="Proteomes" id="UP000000595">
    <property type="component" value="Chromosome"/>
</dbReference>
<dbReference type="GO" id="GO:0051539">
    <property type="term" value="F:4 iron, 4 sulfur cluster binding"/>
    <property type="evidence" value="ECO:0007669"/>
    <property type="project" value="UniProtKB-KW"/>
</dbReference>
<dbReference type="GO" id="GO:0003824">
    <property type="term" value="F:catalytic activity"/>
    <property type="evidence" value="ECO:0007669"/>
    <property type="project" value="InterPro"/>
</dbReference>
<dbReference type="GO" id="GO:0005506">
    <property type="term" value="F:iron ion binding"/>
    <property type="evidence" value="ECO:0007669"/>
    <property type="project" value="UniProtKB-UniRule"/>
</dbReference>
<dbReference type="Gene3D" id="3.80.30.20">
    <property type="entry name" value="tm_1862 like domain"/>
    <property type="match status" value="1"/>
</dbReference>
<dbReference type="HAMAP" id="MF_01251">
    <property type="entry name" value="UPF0313"/>
    <property type="match status" value="1"/>
</dbReference>
<dbReference type="InterPro" id="IPR006638">
    <property type="entry name" value="Elp3/MiaA/NifB-like_rSAM"/>
</dbReference>
<dbReference type="InterPro" id="IPR020612">
    <property type="entry name" value="Methylthiotransferase_CS"/>
</dbReference>
<dbReference type="InterPro" id="IPR007197">
    <property type="entry name" value="rSAM"/>
</dbReference>
<dbReference type="InterPro" id="IPR023404">
    <property type="entry name" value="rSAM_horseshoe"/>
</dbReference>
<dbReference type="InterPro" id="IPR022946">
    <property type="entry name" value="UPF0313"/>
</dbReference>
<dbReference type="InterPro" id="IPR024560">
    <property type="entry name" value="UPF0313_C"/>
</dbReference>
<dbReference type="InterPro" id="IPR013704">
    <property type="entry name" value="UPF0313_N"/>
</dbReference>
<dbReference type="NCBIfam" id="TIGR03904">
    <property type="entry name" value="SAM_YgiQ"/>
    <property type="match status" value="1"/>
</dbReference>
<dbReference type="PANTHER" id="PTHR32331">
    <property type="entry name" value="UPF0313 PROTEIN YGIQ"/>
    <property type="match status" value="1"/>
</dbReference>
<dbReference type="PANTHER" id="PTHR32331:SF0">
    <property type="entry name" value="UPF0313 PROTEIN YGIQ"/>
    <property type="match status" value="1"/>
</dbReference>
<dbReference type="Pfam" id="PF11842">
    <property type="entry name" value="DUF3362"/>
    <property type="match status" value="1"/>
</dbReference>
<dbReference type="Pfam" id="PF04055">
    <property type="entry name" value="Radical_SAM"/>
    <property type="match status" value="1"/>
</dbReference>
<dbReference type="Pfam" id="PF08497">
    <property type="entry name" value="Radical_SAM_N"/>
    <property type="match status" value="1"/>
</dbReference>
<dbReference type="SFLD" id="SFLDG01082">
    <property type="entry name" value="B12-binding_domain_containing"/>
    <property type="match status" value="1"/>
</dbReference>
<dbReference type="SFLD" id="SFLDS00029">
    <property type="entry name" value="Radical_SAM"/>
    <property type="match status" value="1"/>
</dbReference>
<dbReference type="SFLD" id="SFLDG01069">
    <property type="entry name" value="UPF0313"/>
    <property type="match status" value="1"/>
</dbReference>
<dbReference type="SMART" id="SM00729">
    <property type="entry name" value="Elp3"/>
    <property type="match status" value="1"/>
</dbReference>
<dbReference type="SUPFAM" id="SSF102114">
    <property type="entry name" value="Radical SAM enzymes"/>
    <property type="match status" value="1"/>
</dbReference>
<dbReference type="PROSITE" id="PS51918">
    <property type="entry name" value="RADICAL_SAM"/>
    <property type="match status" value="1"/>
</dbReference>
<proteinExistence type="inferred from homology"/>
<name>Y1287_METMA</name>
<gene>
    <name type="ordered locus">MM_1287</name>
</gene>
<comment type="cofactor">
    <cofactor evidence="1">
        <name>[4Fe-4S] cluster</name>
        <dbReference type="ChEBI" id="CHEBI:49883"/>
    </cofactor>
    <text evidence="1">Binds 1 [4Fe-4S] cluster. The cluster is coordinated with 3 cysteines and an exchangeable S-adenosyl-L-methionine.</text>
</comment>
<comment type="similarity">
    <text evidence="1">Belongs to the UPF0313 family.</text>
</comment>
<keyword id="KW-0004">4Fe-4S</keyword>
<keyword id="KW-0408">Iron</keyword>
<keyword id="KW-0411">Iron-sulfur</keyword>
<keyword id="KW-0479">Metal-binding</keyword>
<keyword id="KW-0949">S-adenosyl-L-methionine</keyword>
<organism>
    <name type="scientific">Methanosarcina mazei (strain ATCC BAA-159 / DSM 3647 / Goe1 / Go1 / JCM 11833 / OCM 88)</name>
    <name type="common">Methanosarcina frisia</name>
    <dbReference type="NCBI Taxonomy" id="192952"/>
    <lineage>
        <taxon>Archaea</taxon>
        <taxon>Methanobacteriati</taxon>
        <taxon>Methanobacteriota</taxon>
        <taxon>Stenosarchaea group</taxon>
        <taxon>Methanomicrobia</taxon>
        <taxon>Methanosarcinales</taxon>
        <taxon>Methanosarcinaceae</taxon>
        <taxon>Methanosarcina</taxon>
    </lineage>
</organism>
<protein>
    <recommendedName>
        <fullName evidence="1">UPF0313 protein MM_1287</fullName>
    </recommendedName>
</protein>
<feature type="chain" id="PRO_0000076405" description="UPF0313 protein MM_1287">
    <location>
        <begin position="1"/>
        <end position="626"/>
    </location>
</feature>
<feature type="domain" description="Radical SAM core" evidence="2">
    <location>
        <begin position="320"/>
        <end position="589"/>
    </location>
</feature>
<feature type="region of interest" description="Disordered" evidence="3">
    <location>
        <begin position="206"/>
        <end position="227"/>
    </location>
</feature>
<feature type="binding site" evidence="1">
    <location>
        <position position="334"/>
    </location>
    <ligand>
        <name>[4Fe-4S] cluster</name>
        <dbReference type="ChEBI" id="CHEBI:49883"/>
        <note>4Fe-4S-S-AdoMet</note>
    </ligand>
</feature>
<feature type="binding site" evidence="1">
    <location>
        <position position="338"/>
    </location>
    <ligand>
        <name>[4Fe-4S] cluster</name>
        <dbReference type="ChEBI" id="CHEBI:49883"/>
        <note>4Fe-4S-S-AdoMet</note>
    </ligand>
</feature>
<feature type="binding site" evidence="1">
    <location>
        <position position="341"/>
    </location>
    <ligand>
        <name>[4Fe-4S] cluster</name>
        <dbReference type="ChEBI" id="CHEBI:49883"/>
        <note>4Fe-4S-S-AdoMet</note>
    </ligand>
</feature>
<accession>Q8PXD4</accession>
<sequence length="626" mass="70604">MSPEEVKARGWKELDVILVTGDAYVDHSSFGTAIIGRVLEDAGFRVGIIAQPRWENPEDFKKLGKPRLFFSVSAGNTDSMVSNLTPGLKPRNKDAYSPGGKTGLRPNRAAIIYSNRIKEAFPDMPIVLGGIEASMRRFAHYDYLSDKVRQSILADAPADLVVYGMGELQIVEIAKRLQAGEDIKGIRDISGTVWKMEVKAWKELKGKGKEKAGEQDESENATEEVAKDKSLDPAEFFKEYVEIPSFSEVSQDKAVFAKAFRTYFLEQNPVTGKGIVQPHPKTIIIQNKPMRPLTEAELDHVYELPYTGETHPSYTEPVPALEMVKFSLTTHRGCFGGCSFCAITQHQGRMIASRSIESILREAKKLTQKPDFKGIINGVGGPTANMYGMECRSWEKKGACLDKACLYPRVCPALDTSHKKLLELMHRLRELPGVRHVFTGYGVRYDLALEDEEYLEELCAHHISGQLRIAPEHFSGRVTDAMSKPGKEVYEKFADRFNAFNKKCGKEQYIVNYLMSGHPGCTLKDMIEMAEYVRDHGGYTEQVQDFTPTPMTVSTCMYYTGLDPFTGKKMYVARDKKEKAMQRALMHYRNPANYELVYEALEKAGRLDLVGNAHKCLIRRKERQRK</sequence>
<evidence type="ECO:0000255" key="1">
    <source>
        <dbReference type="HAMAP-Rule" id="MF_01251"/>
    </source>
</evidence>
<evidence type="ECO:0000255" key="2">
    <source>
        <dbReference type="PROSITE-ProRule" id="PRU01266"/>
    </source>
</evidence>
<evidence type="ECO:0000256" key="3">
    <source>
        <dbReference type="SAM" id="MobiDB-lite"/>
    </source>
</evidence>
<reference key="1">
    <citation type="journal article" date="2002" name="J. Mol. Microbiol. Biotechnol.">
        <title>The genome of Methanosarcina mazei: evidence for lateral gene transfer between Bacteria and Archaea.</title>
        <authorList>
            <person name="Deppenmeier U."/>
            <person name="Johann A."/>
            <person name="Hartsch T."/>
            <person name="Merkl R."/>
            <person name="Schmitz R.A."/>
            <person name="Martinez-Arias R."/>
            <person name="Henne A."/>
            <person name="Wiezer A."/>
            <person name="Baeumer S."/>
            <person name="Jacobi C."/>
            <person name="Brueggemann H."/>
            <person name="Lienard T."/>
            <person name="Christmann A."/>
            <person name="Boemecke M."/>
            <person name="Steckel S."/>
            <person name="Bhattacharyya A."/>
            <person name="Lykidis A."/>
            <person name="Overbeek R."/>
            <person name="Klenk H.-P."/>
            <person name="Gunsalus R.P."/>
            <person name="Fritz H.-J."/>
            <person name="Gottschalk G."/>
        </authorList>
    </citation>
    <scope>NUCLEOTIDE SEQUENCE [LARGE SCALE GENOMIC DNA]</scope>
    <source>
        <strain>ATCC BAA-159 / DSM 3647 / Goe1 / Go1 / JCM 11833 / OCM 88</strain>
    </source>
</reference>